<reference key="1">
    <citation type="journal article" date="1996" name="DNA Res.">
        <title>Sequence analysis of the genome of the unicellular cyanobacterium Synechocystis sp. strain PCC6803. II. Sequence determination of the entire genome and assignment of potential protein-coding regions.</title>
        <authorList>
            <person name="Kaneko T."/>
            <person name="Sato S."/>
            <person name="Kotani H."/>
            <person name="Tanaka A."/>
            <person name="Asamizu E."/>
            <person name="Nakamura Y."/>
            <person name="Miyajima N."/>
            <person name="Hirosawa M."/>
            <person name="Sugiura M."/>
            <person name="Sasamoto S."/>
            <person name="Kimura T."/>
            <person name="Hosouchi T."/>
            <person name="Matsuno A."/>
            <person name="Muraki A."/>
            <person name="Nakazaki N."/>
            <person name="Naruo K."/>
            <person name="Okumura S."/>
            <person name="Shimpo S."/>
            <person name="Takeuchi C."/>
            <person name="Wada T."/>
            <person name="Watanabe A."/>
            <person name="Yamada M."/>
            <person name="Yasuda M."/>
            <person name="Tabata S."/>
        </authorList>
    </citation>
    <scope>NUCLEOTIDE SEQUENCE [LARGE SCALE GENOMIC DNA]</scope>
    <source>
        <strain>ATCC 27184 / PCC 6803 / Kazusa</strain>
    </source>
</reference>
<reference key="2">
    <citation type="journal article" date="2001" name="J. Bacteriol.">
        <title>Functional expression in Escherichia coli of low-affinity and high-affinity Na(+)(Li(+))/H(+) antiporters of Synechocystis.</title>
        <authorList>
            <person name="Inaba M."/>
            <person name="Sakamoto A."/>
            <person name="Murata N."/>
        </authorList>
    </citation>
    <scope>GENE NAME</scope>
    <source>
        <strain>ATCC 27184 / PCC 6803 / N-1</strain>
    </source>
</reference>
<reference key="3">
    <citation type="journal article" date="2002" name="Biochemistry (Mosc.)">
        <title>Functional analysis of the Na+/H+ antiporter encoding genes of the cyanobacterium Synechocystis PCC 6803.</title>
        <authorList>
            <person name="Elanskaya I.V."/>
            <person name="Karandashova I.V."/>
            <person name="Bogachev A.V."/>
            <person name="Hagemann M."/>
        </authorList>
    </citation>
    <scope>FUNCTION</scope>
    <source>
        <strain>ATCC 27184 / PCC 6803 / N-1</strain>
    </source>
</reference>
<comment type="function">
    <text evidence="3">Na(+)/H(+) antiporter.</text>
</comment>
<comment type="subcellular location">
    <subcellularLocation>
        <location evidence="2">Membrane</location>
        <topology evidence="2">Multi-pass membrane protein</topology>
    </subcellularLocation>
</comment>
<comment type="similarity">
    <text evidence="2">Belongs to the monovalent cation:proton antiporter 2 (CPA2) transporter (TC 2.A.37) family.</text>
</comment>
<gene>
    <name type="primary">nhaS5</name>
    <name type="synonym">napA</name>
    <name type="ordered locus">slr0415</name>
</gene>
<dbReference type="EMBL" id="BA000022">
    <property type="protein sequence ID" value="BAA10378.1"/>
    <property type="molecule type" value="Genomic_DNA"/>
</dbReference>
<dbReference type="PIR" id="S76532">
    <property type="entry name" value="S76532"/>
</dbReference>
<dbReference type="SMR" id="Q55736"/>
<dbReference type="FunCoup" id="Q55736">
    <property type="interactions" value="117"/>
</dbReference>
<dbReference type="IntAct" id="Q55736">
    <property type="interactions" value="3"/>
</dbReference>
<dbReference type="STRING" id="1148.gene:10499879"/>
<dbReference type="PaxDb" id="1148-1001647"/>
<dbReference type="EnsemblBacteria" id="BAA10378">
    <property type="protein sequence ID" value="BAA10378"/>
    <property type="gene ID" value="BAA10378"/>
</dbReference>
<dbReference type="KEGG" id="syn:slr0415"/>
<dbReference type="eggNOG" id="COG0475">
    <property type="taxonomic scope" value="Bacteria"/>
</dbReference>
<dbReference type="eggNOG" id="COG0589">
    <property type="taxonomic scope" value="Bacteria"/>
</dbReference>
<dbReference type="InParanoid" id="Q55736"/>
<dbReference type="PhylomeDB" id="Q55736"/>
<dbReference type="Proteomes" id="UP000001425">
    <property type="component" value="Chromosome"/>
</dbReference>
<dbReference type="GO" id="GO:0016020">
    <property type="term" value="C:membrane"/>
    <property type="evidence" value="ECO:0007669"/>
    <property type="project" value="UniProtKB-SubCell"/>
</dbReference>
<dbReference type="GO" id="GO:0015297">
    <property type="term" value="F:antiporter activity"/>
    <property type="evidence" value="ECO:0007669"/>
    <property type="project" value="UniProtKB-KW"/>
</dbReference>
<dbReference type="GO" id="GO:1902600">
    <property type="term" value="P:proton transmembrane transport"/>
    <property type="evidence" value="ECO:0007669"/>
    <property type="project" value="InterPro"/>
</dbReference>
<dbReference type="GO" id="GO:0006814">
    <property type="term" value="P:sodium ion transport"/>
    <property type="evidence" value="ECO:0007669"/>
    <property type="project" value="UniProtKB-KW"/>
</dbReference>
<dbReference type="CDD" id="cd01988">
    <property type="entry name" value="USP_NhaS5_C"/>
    <property type="match status" value="2"/>
</dbReference>
<dbReference type="Gene3D" id="1.20.1530.20">
    <property type="match status" value="1"/>
</dbReference>
<dbReference type="Gene3D" id="3.40.50.12370">
    <property type="match status" value="1"/>
</dbReference>
<dbReference type="InterPro" id="IPR006153">
    <property type="entry name" value="Cation/H_exchanger_TM"/>
</dbReference>
<dbReference type="InterPro" id="IPR038770">
    <property type="entry name" value="Na+/solute_symporter_sf"/>
</dbReference>
<dbReference type="InterPro" id="IPR006016">
    <property type="entry name" value="UspA"/>
</dbReference>
<dbReference type="PANTHER" id="PTHR43562:SF4">
    <property type="entry name" value="NA(+)_H(+) ANTIPORTER NHAS5"/>
    <property type="match status" value="1"/>
</dbReference>
<dbReference type="PANTHER" id="PTHR43562">
    <property type="entry name" value="NAPA-TYPE SODIUM/HYDROGEN ANTIPORTER"/>
    <property type="match status" value="1"/>
</dbReference>
<dbReference type="Pfam" id="PF00999">
    <property type="entry name" value="Na_H_Exchanger"/>
    <property type="match status" value="1"/>
</dbReference>
<dbReference type="Pfam" id="PF00582">
    <property type="entry name" value="Usp"/>
    <property type="match status" value="2"/>
</dbReference>
<dbReference type="SUPFAM" id="SSF52402">
    <property type="entry name" value="Adenine nucleotide alpha hydrolases-like"/>
    <property type="match status" value="2"/>
</dbReference>
<name>NHAS5_SYNY3</name>
<evidence type="ECO:0000255" key="1"/>
<evidence type="ECO:0000305" key="2"/>
<evidence type="ECO:0000305" key="3">
    <source>
    </source>
</evidence>
<sequence length="698" mass="75548">MDGLFAPIPSNPLIDFTILLLVTLILPPIFERLKLPGLVGLLFAGIVLGKSGLGVLNEDSESIKLFTDIGKIYLMFVAGLEIDMVDFRRTRNRSLLYGSLTFAVPLLTGLAVGLTFGYSFNASVLLGSLFASHTLLGYPIVQRLGIVRNQAVMVTIGATIFTDIAALLVLAICISIHSGSFSPAGLVVQLVAIAVYSALVLIGFDWAGREYFRRTGDEQSNQFLFVLLAVFLASVGSELINVDKIVGAFLAGLAVNDVLGNSPVKEKVEFLGTTLFIPFFFIGIGLLLDLPAFLVTLTTLFPLVVAIVVGLILSKGVAAILAQWKLGYTWVEGLTMWSLSIPQVAATLAAAVAGYQAVNAAGDRLVSETVLNTIIVLMLITSIVGPLMTAKFAPKIPIPNTLSSLTEDLDDPEENGAVTLIPPKASTFTVLVPTQNPQTLSYLLEMGALIARHESGVVIPLAIAKAPVHMDDPGLTSRLARNELLLQQATELATNLKVDAHPALRIDDDVARAISHTAREKNADLIIMGWSQQTLGLRAKLFGSTIDSVFWSAHCPVAVMRLLSDPRSFHRILFPIKNLTPQTLELFQFTQRLAETNGAIVTLLHVCPHNTSPQQVQAFKTEMERFLNQCRATADYPIKVICHDDAAKVLVRVSHTFDLVVLRSFRRRSVGGVALGEVTDKILREITSSFVLFGDPYA</sequence>
<keyword id="KW-0050">Antiport</keyword>
<keyword id="KW-0406">Ion transport</keyword>
<keyword id="KW-0472">Membrane</keyword>
<keyword id="KW-1185">Reference proteome</keyword>
<keyword id="KW-0915">Sodium</keyword>
<keyword id="KW-0739">Sodium transport</keyword>
<keyword id="KW-0812">Transmembrane</keyword>
<keyword id="KW-1133">Transmembrane helix</keyword>
<keyword id="KW-0813">Transport</keyword>
<proteinExistence type="inferred from homology"/>
<accession>Q55736</accession>
<protein>
    <recommendedName>
        <fullName>Na(+)/H(+) antiporter NhaS5</fullName>
    </recommendedName>
    <alternativeName>
        <fullName>Sodium/proton antiporter NhaS5</fullName>
    </alternativeName>
</protein>
<feature type="chain" id="PRO_0000423931" description="Na(+)/H(+) antiporter NhaS5">
    <location>
        <begin position="1"/>
        <end position="698"/>
    </location>
</feature>
<feature type="transmembrane region" description="Helical" evidence="1">
    <location>
        <begin position="10"/>
        <end position="30"/>
    </location>
</feature>
<feature type="transmembrane region" description="Helical" evidence="1">
    <location>
        <begin position="35"/>
        <end position="55"/>
    </location>
</feature>
<feature type="transmembrane region" description="Helical" evidence="1">
    <location>
        <begin position="65"/>
        <end position="85"/>
    </location>
</feature>
<feature type="transmembrane region" description="Helical" evidence="1">
    <location>
        <begin position="100"/>
        <end position="120"/>
    </location>
</feature>
<feature type="transmembrane region" description="Helical" evidence="1">
    <location>
        <begin position="121"/>
        <end position="141"/>
    </location>
</feature>
<feature type="transmembrane region" description="Helical" evidence="1">
    <location>
        <begin position="156"/>
        <end position="176"/>
    </location>
</feature>
<feature type="transmembrane region" description="Helical" evidence="1">
    <location>
        <begin position="184"/>
        <end position="204"/>
    </location>
</feature>
<feature type="transmembrane region" description="Helical" evidence="1">
    <location>
        <begin position="222"/>
        <end position="242"/>
    </location>
</feature>
<feature type="transmembrane region" description="Helical" evidence="1">
    <location>
        <begin position="275"/>
        <end position="295"/>
    </location>
</feature>
<feature type="transmembrane region" description="Helical" evidence="1">
    <location>
        <begin position="300"/>
        <end position="320"/>
    </location>
</feature>
<feature type="transmembrane region" description="Helical" evidence="1">
    <location>
        <begin position="333"/>
        <end position="353"/>
    </location>
</feature>
<feature type="transmembrane region" description="Helical" evidence="1">
    <location>
        <begin position="370"/>
        <end position="390"/>
    </location>
</feature>
<organism>
    <name type="scientific">Synechocystis sp. (strain ATCC 27184 / PCC 6803 / Kazusa)</name>
    <dbReference type="NCBI Taxonomy" id="1111708"/>
    <lineage>
        <taxon>Bacteria</taxon>
        <taxon>Bacillati</taxon>
        <taxon>Cyanobacteriota</taxon>
        <taxon>Cyanophyceae</taxon>
        <taxon>Synechococcales</taxon>
        <taxon>Merismopediaceae</taxon>
        <taxon>Synechocystis</taxon>
    </lineage>
</organism>